<protein>
    <recommendedName>
        <fullName evidence="8">Histidine-binding periplasmic protein</fullName>
        <shortName>HBP</shortName>
    </recommendedName>
</protein>
<organism>
    <name type="scientific">Salmonella typhimurium (strain LT2 / SGSC1412 / ATCC 700720)</name>
    <dbReference type="NCBI Taxonomy" id="99287"/>
    <lineage>
        <taxon>Bacteria</taxon>
        <taxon>Pseudomonadati</taxon>
        <taxon>Pseudomonadota</taxon>
        <taxon>Gammaproteobacteria</taxon>
        <taxon>Enterobacterales</taxon>
        <taxon>Enterobacteriaceae</taxon>
        <taxon>Salmonella</taxon>
    </lineage>
</organism>
<evidence type="ECO:0000250" key="1">
    <source>
        <dbReference type="UniProtKB" id="P0AEU0"/>
    </source>
</evidence>
<evidence type="ECO:0000269" key="2">
    <source>
    </source>
</evidence>
<evidence type="ECO:0000269" key="3">
    <source>
    </source>
</evidence>
<evidence type="ECO:0000269" key="4">
    <source>
    </source>
</evidence>
<evidence type="ECO:0000269" key="5">
    <source>
    </source>
</evidence>
<evidence type="ECO:0000269" key="6">
    <source>
    </source>
</evidence>
<evidence type="ECO:0000303" key="7">
    <source>
    </source>
</evidence>
<evidence type="ECO:0000305" key="8"/>
<evidence type="ECO:0000305" key="9">
    <source>
    </source>
</evidence>
<evidence type="ECO:0007744" key="10">
    <source>
        <dbReference type="PDB" id="1HPB"/>
    </source>
</evidence>
<comment type="function">
    <text evidence="3 5 6">Part of the ABC transporter complex HisPMQJ involved in histidine transport (PubMed:7050725, PubMed:9520394, PubMed:9873010). Binds histidine (PubMed:9520394, PubMed:9873010). Interacts with HisQMP and stimulates ATPase activity of HisP, which results in histidine translocation (PubMed:9520394, PubMed:9873010). May have some additional function(s) in translocation that is independent of the stimulation of ATP hydrolysis (PubMed:9873010).</text>
</comment>
<comment type="subunit">
    <text evidence="3 5">The complex is composed of two ATP-binding proteins (HisP), two transmembrane proteins (HisM and HisQ) and a solute-binding protein (HisJ).</text>
</comment>
<comment type="subcellular location">
    <subcellularLocation>
        <location evidence="9">Periplasm</location>
    </subcellularLocation>
</comment>
<comment type="domain">
    <text evidence="4 6">Has a bi-lobal structure; the two lobes, one bigger than the other, are connected by two short strands and are in contact with each other, enclosing the histidine (PubMed:8307974). Both lobes are involved in stimulating the ATPase activity of HisP (PubMed:9873010).</text>
</comment>
<comment type="similarity">
    <text evidence="8">Belongs to the bacterial solute-binding protein 3 family.</text>
</comment>
<sequence length="260" mass="28379">MKKLALSLSLVLAFSSATAAFAAIPQKIRIGTDPTYAPFESKNAQGELVGFDIDLAKELCKRINTQCTFVENPLDALIPSLKAKKIDAIMSSLSITEKRQQEIAFTDKLYAADSRLVVAKNSDIQPTVASLKGKRVGVLQGTTQETFGNEHWAPKGIEIVSYQGQDNIYSDLTAGRIDAAFQDEVAASEGFLKQPVGKDYKFGGPAVKDEKLFGVGTGMGLRKEDNELREALNKAFAEMRADGTYEKLAKKYFDFDVYGG</sequence>
<dbReference type="EMBL" id="V01373">
    <property type="protein sequence ID" value="CAA24659.1"/>
    <property type="molecule type" value="Genomic_DNA"/>
</dbReference>
<dbReference type="EMBL" id="V01372">
    <property type="protein sequence ID" value="CAA24658.1"/>
    <property type="molecule type" value="Genomic_DNA"/>
</dbReference>
<dbReference type="EMBL" id="J01805">
    <property type="protein sequence ID" value="AAA75578.1"/>
    <property type="molecule type" value="Genomic_DNA"/>
</dbReference>
<dbReference type="EMBL" id="AE006468">
    <property type="protein sequence ID" value="AAL21255.1"/>
    <property type="molecule type" value="Genomic_DNA"/>
</dbReference>
<dbReference type="PIR" id="A93893">
    <property type="entry name" value="JHEBT"/>
</dbReference>
<dbReference type="RefSeq" id="NP_461296.1">
    <property type="nucleotide sequence ID" value="NC_003197.2"/>
</dbReference>
<dbReference type="RefSeq" id="WP_000731868.1">
    <property type="nucleotide sequence ID" value="NC_003197.2"/>
</dbReference>
<dbReference type="PDB" id="1HPB">
    <property type="method" value="X-ray"/>
    <property type="resolution" value="2.50 A"/>
    <property type="chains" value="P=23-260"/>
</dbReference>
<dbReference type="PDBsum" id="1HPB"/>
<dbReference type="BMRB" id="P02910"/>
<dbReference type="SMR" id="P02910"/>
<dbReference type="STRING" id="99287.STM2354"/>
<dbReference type="PaxDb" id="99287-STM2354"/>
<dbReference type="GeneID" id="1253876"/>
<dbReference type="KEGG" id="stm:STM2354"/>
<dbReference type="PATRIC" id="fig|99287.12.peg.2491"/>
<dbReference type="HOGENOM" id="CLU_019602_18_0_6"/>
<dbReference type="OMA" id="FSEEPYG"/>
<dbReference type="PhylomeDB" id="P02910"/>
<dbReference type="BioCyc" id="SENT99287:STM2354-MONOMER"/>
<dbReference type="EvolutionaryTrace" id="P02910"/>
<dbReference type="Proteomes" id="UP000001014">
    <property type="component" value="Chromosome"/>
</dbReference>
<dbReference type="GO" id="GO:0030288">
    <property type="term" value="C:outer membrane-bounded periplasmic space"/>
    <property type="evidence" value="ECO:0000318"/>
    <property type="project" value="GO_Central"/>
</dbReference>
<dbReference type="GO" id="GO:0016597">
    <property type="term" value="F:amino acid binding"/>
    <property type="evidence" value="ECO:0000318"/>
    <property type="project" value="GO_Central"/>
</dbReference>
<dbReference type="GO" id="GO:0006865">
    <property type="term" value="P:amino acid transport"/>
    <property type="evidence" value="ECO:0007669"/>
    <property type="project" value="UniProtKB-KW"/>
</dbReference>
<dbReference type="CDD" id="cd13703">
    <property type="entry name" value="PBP2_HisJ_LAO"/>
    <property type="match status" value="1"/>
</dbReference>
<dbReference type="FunFam" id="3.40.190.10:FF:000020">
    <property type="entry name" value="Histidine ABC transporter substrate-binding periplasmic protein"/>
    <property type="match status" value="1"/>
</dbReference>
<dbReference type="Gene3D" id="3.40.190.10">
    <property type="entry name" value="Periplasmic binding protein-like II"/>
    <property type="match status" value="2"/>
</dbReference>
<dbReference type="InterPro" id="IPR005768">
    <property type="entry name" value="Lys_Arg_Orn-bd"/>
</dbReference>
<dbReference type="InterPro" id="IPR018313">
    <property type="entry name" value="SBP_3_CS"/>
</dbReference>
<dbReference type="InterPro" id="IPR001638">
    <property type="entry name" value="Solute-binding_3/MltF_N"/>
</dbReference>
<dbReference type="NCBIfam" id="TIGR01096">
    <property type="entry name" value="3A0103s03R"/>
    <property type="match status" value="1"/>
</dbReference>
<dbReference type="NCBIfam" id="NF011965">
    <property type="entry name" value="PRK15437.1"/>
    <property type="match status" value="1"/>
</dbReference>
<dbReference type="PANTHER" id="PTHR35936:SF13">
    <property type="entry name" value="HISTIDINE-BINDING PERIPLASMIC PROTEIN"/>
    <property type="match status" value="1"/>
</dbReference>
<dbReference type="PANTHER" id="PTHR35936">
    <property type="entry name" value="MEMBRANE-BOUND LYTIC MUREIN TRANSGLYCOSYLASE F"/>
    <property type="match status" value="1"/>
</dbReference>
<dbReference type="Pfam" id="PF00497">
    <property type="entry name" value="SBP_bac_3"/>
    <property type="match status" value="1"/>
</dbReference>
<dbReference type="SMART" id="SM00062">
    <property type="entry name" value="PBPb"/>
    <property type="match status" value="1"/>
</dbReference>
<dbReference type="SUPFAM" id="SSF53850">
    <property type="entry name" value="Periplasmic binding protein-like II"/>
    <property type="match status" value="1"/>
</dbReference>
<dbReference type="PROSITE" id="PS01039">
    <property type="entry name" value="SBP_BACTERIAL_3"/>
    <property type="match status" value="1"/>
</dbReference>
<accession>P02910</accession>
<name>HISJ_SALTY</name>
<proteinExistence type="evidence at protein level"/>
<gene>
    <name evidence="7" type="primary">hisJ</name>
    <name type="ordered locus">STM2354</name>
</gene>
<feature type="signal peptide" evidence="2">
    <location>
        <begin position="1"/>
        <end position="22"/>
    </location>
</feature>
<feature type="chain" id="PRO_0000031763" description="Histidine-binding periplasmic protein">
    <location>
        <begin position="23"/>
        <end position="260"/>
    </location>
</feature>
<feature type="binding site" evidence="1">
    <location>
        <position position="91"/>
    </location>
    <ligand>
        <name>L-histidine</name>
        <dbReference type="ChEBI" id="CHEBI:57595"/>
    </ligand>
</feature>
<feature type="binding site" evidence="1">
    <location>
        <position position="92"/>
    </location>
    <ligand>
        <name>L-histidine</name>
        <dbReference type="ChEBI" id="CHEBI:57595"/>
    </ligand>
</feature>
<feature type="binding site" evidence="1">
    <location>
        <position position="94"/>
    </location>
    <ligand>
        <name>L-histidine</name>
        <dbReference type="ChEBI" id="CHEBI:57595"/>
    </ligand>
</feature>
<feature type="binding site" evidence="1">
    <location>
        <position position="99"/>
    </location>
    <ligand>
        <name>L-histidine</name>
        <dbReference type="ChEBI" id="CHEBI:57595"/>
    </ligand>
</feature>
<feature type="binding site" evidence="1">
    <location>
        <position position="143"/>
    </location>
    <ligand>
        <name>L-histidine</name>
        <dbReference type="ChEBI" id="CHEBI:57595"/>
    </ligand>
</feature>
<feature type="binding site" evidence="1">
    <location>
        <position position="183"/>
    </location>
    <ligand>
        <name>L-histidine</name>
        <dbReference type="ChEBI" id="CHEBI:57595"/>
    </ligand>
</feature>
<feature type="disulfide bond" evidence="1">
    <location>
        <begin position="60"/>
        <end position="67"/>
    </location>
</feature>
<feature type="mutagenesis site" description="Decrease in ATPase-inducing activity and histidine transport; when associated with K-47." evidence="6">
    <original>E</original>
    <variation>K</variation>
    <location>
        <position position="40"/>
    </location>
</feature>
<feature type="mutagenesis site" description="Increases ATPase-inducing activity and histidine transport; when associated with K-47." evidence="6">
    <original>K</original>
    <variation>E</variation>
    <location>
        <position position="42"/>
    </location>
</feature>
<feature type="mutagenesis site" description="Decrease in ATPase-inducing activity and histidine transport; when associated with K-40. Increases ATPase-inducing activity and histidine transport; when associated with E-42." evidence="6">
    <original>E</original>
    <variation>K</variation>
    <location>
        <position position="47"/>
    </location>
</feature>
<feature type="mutagenesis site" description="Strong decrease in ATPase-inducing activity and histidine transport." evidence="6">
    <original>D</original>
    <variation>A</variation>
    <variation>N</variation>
    <location>
        <position position="171"/>
    </location>
</feature>
<feature type="mutagenesis site" description="Strong decrease in ATPase-inducing activity and histidine transport." evidence="6">
    <original>R</original>
    <variation>D</variation>
    <variation>S</variation>
    <location>
        <position position="176"/>
    </location>
</feature>
<feature type="mutagenesis site" description="Slight decrease in ATPase-inducing activity and histidine transport." evidence="6">
    <original>D</original>
    <variation>A</variation>
    <location>
        <position position="178"/>
    </location>
</feature>
<feature type="sequence conflict" description="In Ref. 4; AA sequence." evidence="8" ref="4">
    <original>T</original>
    <variation>N</variation>
    <location>
        <position position="173"/>
    </location>
</feature>
<reference key="1">
    <citation type="journal article" date="1982" name="Nature">
        <title>Complete nucleotide sequence and identification of membrane components of the histidine transport operon of S. typhimurium.</title>
        <authorList>
            <person name="Higgins C.F."/>
            <person name="Haag P.D."/>
            <person name="Nikaido K."/>
            <person name="Ardeshir F."/>
            <person name="Garcia G."/>
            <person name="Ames G.F.-L."/>
        </authorList>
    </citation>
    <scope>NUCLEOTIDE SEQUENCE [GENOMIC DNA]</scope>
    <scope>FUNCTION</scope>
    <scope>SUBUNIT</scope>
</reference>
<reference key="2">
    <citation type="journal article" date="1981" name="Proc. Natl. Acad. Sci. U.S.A.">
        <title>Two periplasmic transport proteins which interact with a common membrane receptor show extensive homology: complete nucleotide sequences.</title>
        <authorList>
            <person name="Higgins C.F."/>
            <person name="Ames G.F.-L."/>
        </authorList>
    </citation>
    <scope>NUCLEOTIDE SEQUENCE [GENOMIC DNA]</scope>
</reference>
<reference key="3">
    <citation type="journal article" date="2001" name="Nature">
        <title>Complete genome sequence of Salmonella enterica serovar Typhimurium LT2.</title>
        <authorList>
            <person name="McClelland M."/>
            <person name="Sanderson K.E."/>
            <person name="Spieth J."/>
            <person name="Clifton S.W."/>
            <person name="Latreille P."/>
            <person name="Courtney L."/>
            <person name="Porwollik S."/>
            <person name="Ali J."/>
            <person name="Dante M."/>
            <person name="Du F."/>
            <person name="Hou S."/>
            <person name="Layman D."/>
            <person name="Leonard S."/>
            <person name="Nguyen C."/>
            <person name="Scott K."/>
            <person name="Holmes A."/>
            <person name="Grewal N."/>
            <person name="Mulvaney E."/>
            <person name="Ryan E."/>
            <person name="Sun H."/>
            <person name="Florea L."/>
            <person name="Miller W."/>
            <person name="Stoneking T."/>
            <person name="Nhan M."/>
            <person name="Waterston R."/>
            <person name="Wilson R.K."/>
        </authorList>
    </citation>
    <scope>NUCLEOTIDE SEQUENCE [LARGE SCALE GENOMIC DNA]</scope>
    <source>
        <strain>LT2 / SGSC1412 / ATCC 700720</strain>
    </source>
</reference>
<reference key="4">
    <citation type="journal article" date="1981" name="J. Biol. Chem.">
        <title>The amino acid sequence of the histidine binding protein of Salmonella typhimurium.</title>
        <authorList>
            <person name="Hogg R.W."/>
        </authorList>
    </citation>
    <scope>PROTEIN SEQUENCE OF 23-260</scope>
</reference>
<reference key="5">
    <citation type="journal article" date="1998" name="Proc. Natl. Acad. Sci. U.S.A.">
        <title>In vitro disassembly and reassembly of an ABC transporter, the histidine permease.</title>
        <authorList>
            <person name="Liu P.Q."/>
            <person name="Ames G.F."/>
        </authorList>
    </citation>
    <scope>FUNCTION</scope>
    <scope>SUBUNIT</scope>
</reference>
<reference key="6">
    <citation type="journal article" date="1999" name="J. Biol. Chem.">
        <title>Both lobes of the soluble receptor of the periplasmic histidine permease, an ABC transporter (traffic ATPase), interact with the membrane-bound complex. Effect of different ligands and consequences for the mechanism of action.</title>
        <authorList>
            <person name="Liu C.E."/>
            <person name="Liu P.Q."/>
            <person name="Wolf A."/>
            <person name="Lin E."/>
            <person name="Ames G.F."/>
        </authorList>
    </citation>
    <scope>FUNCTION</scope>
    <scope>DOMAIN</scope>
    <scope>MUTAGENESIS OF GLU-40; LYS-42; GLU-47; ASP-171; ARG-176 AND ASP-178</scope>
</reference>
<reference evidence="10" key="7">
    <citation type="journal article" date="1994" name="J. Biol. Chem.">
        <title>The bacterial periplasmic histidine-binding protein. Structure/function analysis of the ligand-binding site and comparison with related proteins.</title>
        <authorList>
            <person name="Oh B.-H."/>
            <person name="Kang C.-H."/>
            <person name="de Vont H."/>
            <person name="Kim S.-H."/>
            <person name="Nikaido K."/>
            <person name="Joshi A.K."/>
            <person name="Ames G.F.-L."/>
        </authorList>
    </citation>
    <scope>X-RAY CRYSTALLOGRAPHY (2.5 ANGSTROMS) IN COMPLEX WITH HISTIDINE</scope>
    <scope>DOMAIN</scope>
</reference>
<keyword id="KW-0002">3D-structure</keyword>
<keyword id="KW-0029">Amino-acid transport</keyword>
<keyword id="KW-0903">Direct protein sequencing</keyword>
<keyword id="KW-1015">Disulfide bond</keyword>
<keyword id="KW-0574">Periplasm</keyword>
<keyword id="KW-1185">Reference proteome</keyword>
<keyword id="KW-0732">Signal</keyword>
<keyword id="KW-0813">Transport</keyword>